<evidence type="ECO:0000255" key="1">
    <source>
        <dbReference type="HAMAP-Rule" id="MF_04132"/>
    </source>
</evidence>
<keyword id="KW-0167">Capsid protein</keyword>
<keyword id="KW-0175">Coiled coil</keyword>
<keyword id="KW-1015">Disulfide bond</keyword>
<keyword id="KW-0348">Hemagglutinin</keyword>
<keyword id="KW-1032">Host cell membrane</keyword>
<keyword id="KW-1035">Host cytoplasm</keyword>
<keyword id="KW-1037">Host cytoskeleton</keyword>
<keyword id="KW-1038">Host endoplasmic reticulum</keyword>
<keyword id="KW-1043">Host membrane</keyword>
<keyword id="KW-0945">Host-virus interaction</keyword>
<keyword id="KW-0472">Membrane</keyword>
<keyword id="KW-1152">Outer capsid protein</keyword>
<keyword id="KW-1161">Viral attachment to host cell</keyword>
<keyword id="KW-1162">Viral penetration into host cytoplasm</keyword>
<keyword id="KW-1173">Viral penetration via permeabilization of host membrane</keyword>
<keyword id="KW-0946">Virion</keyword>
<keyword id="KW-1160">Virus entry into host cell</keyword>
<protein>
    <recommendedName>
        <fullName evidence="1">Outer capsid protein VP4</fullName>
    </recommendedName>
    <alternativeName>
        <fullName evidence="1">Hemagglutinin</fullName>
    </alternativeName>
    <component>
        <recommendedName>
            <fullName evidence="1">Outer capsid protein VP8*</fullName>
        </recommendedName>
    </component>
    <component>
        <recommendedName>
            <fullName evidence="1">Outer capsid protein VP5*</fullName>
        </recommendedName>
    </component>
</protein>
<dbReference type="EMBL" id="U53923">
    <property type="protein sequence ID" value="AAB18952.1"/>
    <property type="molecule type" value="mRNA"/>
</dbReference>
<dbReference type="SMR" id="Q96642"/>
<dbReference type="GO" id="GO:0044172">
    <property type="term" value="C:host cell endoplasmic reticulum-Golgi intermediate compartment"/>
    <property type="evidence" value="ECO:0007669"/>
    <property type="project" value="UniProtKB-SubCell"/>
</dbReference>
<dbReference type="GO" id="GO:0020002">
    <property type="term" value="C:host cell plasma membrane"/>
    <property type="evidence" value="ECO:0007669"/>
    <property type="project" value="UniProtKB-SubCell"/>
</dbReference>
<dbReference type="GO" id="GO:0044168">
    <property type="term" value="C:host cell rough endoplasmic reticulum"/>
    <property type="evidence" value="ECO:0007669"/>
    <property type="project" value="UniProtKB-SubCell"/>
</dbReference>
<dbReference type="GO" id="GO:0044163">
    <property type="term" value="C:host cytoskeleton"/>
    <property type="evidence" value="ECO:0007669"/>
    <property type="project" value="UniProtKB-SubCell"/>
</dbReference>
<dbReference type="GO" id="GO:0016020">
    <property type="term" value="C:membrane"/>
    <property type="evidence" value="ECO:0007669"/>
    <property type="project" value="UniProtKB-KW"/>
</dbReference>
<dbReference type="GO" id="GO:0039624">
    <property type="term" value="C:viral outer capsid"/>
    <property type="evidence" value="ECO:0007669"/>
    <property type="project" value="UniProtKB-UniRule"/>
</dbReference>
<dbReference type="GO" id="GO:0039665">
    <property type="term" value="P:permeabilization of host organelle membrane involved in viral entry into host cell"/>
    <property type="evidence" value="ECO:0007669"/>
    <property type="project" value="UniProtKB-UniRule"/>
</dbReference>
<dbReference type="GO" id="GO:0019062">
    <property type="term" value="P:virion attachment to host cell"/>
    <property type="evidence" value="ECO:0007669"/>
    <property type="project" value="UniProtKB-UniRule"/>
</dbReference>
<dbReference type="Gene3D" id="1.20.5.170">
    <property type="match status" value="1"/>
</dbReference>
<dbReference type="Gene3D" id="2.60.120.200">
    <property type="match status" value="1"/>
</dbReference>
<dbReference type="HAMAP" id="MF_04132">
    <property type="entry name" value="Rota_A_VP4"/>
    <property type="match status" value="1"/>
</dbReference>
<dbReference type="HAMAP" id="MF_04125">
    <property type="entry name" value="Rota_VP4"/>
    <property type="match status" value="1"/>
</dbReference>
<dbReference type="InterPro" id="IPR013320">
    <property type="entry name" value="ConA-like_dom_sf"/>
</dbReference>
<dbReference type="InterPro" id="IPR042546">
    <property type="entry name" value="Rota_A_VP4"/>
</dbReference>
<dbReference type="InterPro" id="IPR035330">
    <property type="entry name" value="Rota_VP4_MID"/>
</dbReference>
<dbReference type="InterPro" id="IPR038017">
    <property type="entry name" value="Rota_VP4_MID_sf"/>
</dbReference>
<dbReference type="InterPro" id="IPR000416">
    <property type="entry name" value="VP4_concanavalin-like"/>
</dbReference>
<dbReference type="InterPro" id="IPR035329">
    <property type="entry name" value="VP4_helical"/>
</dbReference>
<dbReference type="Pfam" id="PF17477">
    <property type="entry name" value="Rota_VP4_MID"/>
    <property type="match status" value="1"/>
</dbReference>
<dbReference type="Pfam" id="PF00426">
    <property type="entry name" value="VP4_haemagglut"/>
    <property type="match status" value="1"/>
</dbReference>
<dbReference type="Pfam" id="PF17478">
    <property type="entry name" value="VP4_helical"/>
    <property type="match status" value="1"/>
</dbReference>
<dbReference type="SUPFAM" id="SSF49899">
    <property type="entry name" value="Concanavalin A-like lectins/glucanases"/>
    <property type="match status" value="1"/>
</dbReference>
<dbReference type="SUPFAM" id="SSF111379">
    <property type="entry name" value="VP4 membrane interaction domain"/>
    <property type="match status" value="1"/>
</dbReference>
<organismHost>
    <name type="scientific">Bos taurus</name>
    <name type="common">Bovine</name>
    <dbReference type="NCBI Taxonomy" id="9913"/>
</organismHost>
<sequence>MASLIYRQLLANSYAVDLSDEIQSVGSEKNQRVTVNPGPFAQTGYAPVNWGPGEVNDSTVVQPVLDGPYQPASFDLPVGNWMLLAPTGPGVVVEGTDNSGRWLSVILIEPGVTSETRTYTMFGSSKQVLVSNASDTKWKFVEMMKTAVDGDYAEWGTLLSDTKLYGMMKYGERLFIYEGETPNATTKGYIVTNYASVEVRPYSDFYIISRSQESACTEYINNGLPPIQNTRNVVPVAISSRSIEPRRVQANEDIVVSKTSLWKEMQYNRDIIIRFRFDNSIIKSGGLAYKWAEISFKAANYQYNYMKDGEEVTAHTTCSVNGVNDFSFNGGSLPTDFAISRYEVIKENSYVYVDYWDDSQTFRNMVYVRSLAANLNDVMCSGGDYSFALPAGQWPVMKGGAATLHTAGVTLSTQFTDYVSLNSLRFRFRLAVEEPSFTITRTRVSKLYGLPAANPNGGREYYEVAGRFSLISLVPSNDDYQAPIMNSVTVRQDLERRLNELREEFNNLSQEIAVSQLIDLAMLPLDMFSMFSGIEGTVNAPQSMATNVMRKFKSSKLASSVSMLTDSLSDAASSIARSTSIRSIGSAASAWANISEQTQDAVNEVATISSQVSQISGKLRLKEITTPTEGMNFDDISAAVLKAKIDRSIQVDPNALPDVITEASEKFIRNRAYRVIDGDESFEAGTGGRFFANKVETLEEMPFNIEKFADLVTHSPVISAIIDFKTLKNLNDNYGITREQAFNLLRSNPKVLRGFIDPNNPIIKNRIEQLIMQCRL</sequence>
<name>VP4_ROTBV</name>
<organism>
    <name type="scientific">Rotavirus A (isolate RVA/Cow/United States/VMRI/1988/G6P[5])</name>
    <name type="common">RV-A</name>
    <dbReference type="NCBI Taxonomy" id="10935"/>
    <lineage>
        <taxon>Viruses</taxon>
        <taxon>Riboviria</taxon>
        <taxon>Orthornavirae</taxon>
        <taxon>Duplornaviricota</taxon>
        <taxon>Resentoviricetes</taxon>
        <taxon>Reovirales</taxon>
        <taxon>Sedoreoviridae</taxon>
        <taxon>Rotavirus</taxon>
        <taxon>Rotavirus A</taxon>
    </lineage>
</organism>
<proteinExistence type="evidence at transcript level"/>
<feature type="chain" id="PRO_0000368095" description="Outer capsid protein VP4" evidence="1">
    <location>
        <begin position="1"/>
        <end position="776"/>
    </location>
</feature>
<feature type="chain" id="PRO_0000368096" description="Outer capsid protein VP8*" evidence="1">
    <location>
        <begin position="1"/>
        <end position="231"/>
    </location>
</feature>
<feature type="chain" id="PRO_0000368097" description="Outer capsid protein VP5*" evidence="1">
    <location>
        <begin position="248"/>
        <end position="776"/>
    </location>
</feature>
<feature type="region of interest" description="Spike head" evidence="1">
    <location>
        <begin position="65"/>
        <end position="224"/>
    </location>
</feature>
<feature type="region of interest" description="Spike body and stalk (antigen domain)" evidence="1">
    <location>
        <begin position="248"/>
        <end position="479"/>
    </location>
</feature>
<feature type="region of interest" description="Hydrophobic; possible role in virus entry into host cell" evidence="1">
    <location>
        <begin position="389"/>
        <end position="409"/>
    </location>
</feature>
<feature type="region of interest" description="Spike foot" evidence="1">
    <location>
        <begin position="510"/>
        <end position="776"/>
    </location>
</feature>
<feature type="coiled-coil region" evidence="1">
    <location>
        <begin position="484"/>
        <end position="518"/>
    </location>
</feature>
<feature type="short sequence motif" description="DGE motif; interaction with ITGA2/ITGB1 heterodimer" evidence="1">
    <location>
        <begin position="308"/>
        <end position="310"/>
    </location>
</feature>
<feature type="short sequence motif" description="YGL motif; interaction with ITGA4" evidence="1">
    <location>
        <begin position="448"/>
        <end position="450"/>
    </location>
</feature>
<feature type="short sequence motif" description="KID motif; interaction with HSPA8" evidence="1">
    <location>
        <begin position="644"/>
        <end position="646"/>
    </location>
</feature>
<feature type="site" description="Cleavage" evidence="1">
    <location>
        <begin position="231"/>
        <end position="232"/>
    </location>
</feature>
<feature type="site" description="Cleavage" evidence="1">
    <location>
        <begin position="241"/>
        <end position="242"/>
    </location>
</feature>
<feature type="site" description="Cleavage; associated with enhancement of infectivity" evidence="1">
    <location>
        <begin position="247"/>
        <end position="248"/>
    </location>
</feature>
<feature type="disulfide bond" evidence="1">
    <location>
        <begin position="318"/>
        <end position="380"/>
    </location>
</feature>
<reference key="1">
    <citation type="journal article" date="1996" name="Vet. Microbiol.">
        <title>The VP4 and VP7 of bovine rotavirus VMRI are antigenically and genetically closely related to P-type 5, G-type 6 strains.</title>
        <authorList>
            <person name="Mummidi S."/>
            <person name="Brooks M.A."/>
            <person name="Paul P.S."/>
            <person name="Lyoo Y.S."/>
            <person name="Zaberezhny A.D."/>
        </authorList>
    </citation>
    <scope>NUCLEOTIDE SEQUENCE [MRNA]</scope>
</reference>
<comment type="function">
    <molecule>Outer capsid protein VP4</molecule>
    <text evidence="1">Spike-forming protein that mediates virion attachment to the host epithelial cell receptors and plays a major role in cell penetration, determination of host range restriction and virulence. Rotavirus attachment and entry into the host cell probably involves multiple sequential contacts between the outer capsid proteins VP4 and VP7, and the cell receptors. It is subsequently lost, together with VP7, following virus entry into the host cell. Following entry into the host cell, low intracellular or intravesicular Ca(2+) concentration probably causes the calcium-stabilized VP7 trimers to dissociate from the virion. This step is probably necessary for the membrane-disrupting entry step and the release of VP4, which is locked onto the virion by VP7. During the virus exit from the host cell, VP4 seems to be required to target the newly formed virions to the host cell lipid rafts.</text>
</comment>
<comment type="function">
    <molecule>Outer capsid protein VP5*</molecule>
    <text evidence="1">Forms the spike 'foot' and 'body' and acts as a membrane permeabilization protein that mediates release of viral particles from endosomal compartments into the cytoplasm. During entry, the part of VP5* that protrudes from the virus folds back on itself and reorganizes from a local dimer to a trimer. This reorganization may be linked to membrane penetration by exposing VP5* hydrophobic region. In integrin-dependent strains, VP5* targets the integrin heterodimer ITGA2/ITGB1 for cell attachment.</text>
</comment>
<comment type="function">
    <molecule>Outer capsid protein VP8*</molecule>
    <text evidence="1">Forms the head of the spikes and mediates the recognition of specific host cell surface glycans. It is the viral hemagglutinin and an important target of neutralizing antibodies. In sialic acid-dependent strains, VP8* binds to host cell sialic acid, most probably a ganglioside, providing the initial contact. In some other strains, VP8* mediates the attachment to histo-blood group antigens (HBGAs) for viral entry.</text>
</comment>
<comment type="subunit">
    <molecule>Outer capsid protein VP4</molecule>
    <text evidence="1">Homotrimer. VP4 adopts a dimeric appearance above the capsid surface, while forming a trimeric base anchored inside the capsid layer. Only hints of the third molecule are observed above the capsid surface. It probably performs a series of molecular rearrangements during viral entry. Prior to trypsin cleavage, it is flexible. The priming trypsin cleavage triggers its rearrangement into rigid spikes with approximate two-fold symmetry of their protruding parts. After an unknown second triggering event, cleaved VP4 may undergo another rearrangement, in which two VP5* subunits fold back on themselves and join a third subunit to form a tightly associated trimer, shaped like a folded umbrella. Interacts with VP6. Interacts with VP7.</text>
</comment>
<comment type="subunit">
    <molecule>Outer capsid protein VP5*</molecule>
    <text evidence="1">Homotrimer. The trimer is coiled-coil stabilized by its C-terminus, however, its N-terminus, known as antigen domain or 'body', seems to be flexible allowing it to self-associate either as a dimer or a trimer.</text>
</comment>
<comment type="subcellular location">
    <molecule>Outer capsid protein VP4</molecule>
    <subcellularLocation>
        <location evidence="1">Virion</location>
    </subcellularLocation>
    <subcellularLocation>
        <location evidence="1">Host rough endoplasmic reticulum</location>
    </subcellularLocation>
    <subcellularLocation>
        <location evidence="1">Host cell membrane</location>
    </subcellularLocation>
    <subcellularLocation>
        <location evidence="1">Host cytoplasm</location>
        <location evidence="1">Host cytoskeleton</location>
    </subcellularLocation>
    <subcellularLocation>
        <location evidence="1">Host endoplasmic reticulum-Golgi intermediate compartment</location>
    </subcellularLocation>
    <text evidence="1">The outer layer contains 180 copies of VP4, grouped as 60 dimers. Immature double-layered particles assembled in the cytoplasm bud across the membrane of the endoplasmic reticulum, acquiring during this process a transient lipid membrane that is modified with the ER resident viral glycoproteins NSP4 and VP7; these enveloped particles also contain VP4. As the particles move towards the interior of the ER cisternae, the transient lipid membrane and the non-structural protein NSP4 are lost, while the virus surface proteins VP4 and VP7 rearrange to form the outermost virus protein layer, yielding mature infectious triple-layered particles. VP4 also seems to associate with lipid rafts of the host cell membrane probably for the exit of the virus from the infected cell by an alternate pathway.</text>
</comment>
<comment type="subcellular location">
    <molecule>Outer capsid protein VP8*</molecule>
    <subcellularLocation>
        <location evidence="1">Virion</location>
    </subcellularLocation>
    <text evidence="1">Outer capsid protein.</text>
</comment>
<comment type="subcellular location">
    <molecule>Outer capsid protein VP5*</molecule>
    <subcellularLocation>
        <location evidence="1">Virion</location>
    </subcellularLocation>
    <text evidence="1">Outer capsid protein.</text>
</comment>
<comment type="domain">
    <molecule>Outer capsid protein VP4</molecule>
    <text evidence="1">The VP4 spike is divided into a foot, a stalk and body, and a head.</text>
</comment>
<comment type="PTM">
    <molecule>Outer capsid protein VP4</molecule>
    <text evidence="1">Proteolytic cleavage by trypsin results in activation of VP4 functions and greatly increases infectivity. The penetration into the host cell is dependent on trypsin treatment of VP4. It produces two peptides, VP5* and VP8* that remain associated with the virion. Cleavage of VP4 by trypsin probably occurs in vivo in the lumen of the intestine prior to infection of enterocytes. Trypsin seems to be incorporated into the three-layered viral particles but remains inactive as long as the viral outer capsid is intact and would only be activated upon the solubilization of the latter.</text>
</comment>
<comment type="miscellaneous">
    <text evidence="1">In group A rotaviruses, VP4 defines the P serotype.</text>
</comment>
<comment type="miscellaneous">
    <text evidence="1">Some rotavirus strains are neuraminidase-sensitive and require sialic acid to attach to the cell surface. Some rotavirus strains are integrin-dependent. Some rotavirus strains depend on ganglioside for their entry into the host cell. Hsp70 also seems to be involved in the entry of some strains.</text>
</comment>
<comment type="similarity">
    <text evidence="1">Belongs to the rotavirus VP4 family.</text>
</comment>
<accession>Q96642</accession>